<keyword id="KW-0067">ATP-binding</keyword>
<keyword id="KW-0143">Chaperone</keyword>
<keyword id="KW-0150">Chloroplast</keyword>
<keyword id="KW-0903">Direct protein sequencing</keyword>
<keyword id="KW-0547">Nucleotide-binding</keyword>
<keyword id="KW-0934">Plastid</keyword>
<keyword id="KW-1185">Reference proteome</keyword>
<organism>
    <name type="scientific">Populus euphratica</name>
    <name type="common">Euphrates poplar</name>
    <dbReference type="NCBI Taxonomy" id="75702"/>
    <lineage>
        <taxon>Eukaryota</taxon>
        <taxon>Viridiplantae</taxon>
        <taxon>Streptophyta</taxon>
        <taxon>Embryophyta</taxon>
        <taxon>Tracheophyta</taxon>
        <taxon>Spermatophyta</taxon>
        <taxon>Magnoliopsida</taxon>
        <taxon>eudicotyledons</taxon>
        <taxon>Gunneridae</taxon>
        <taxon>Pentapetalae</taxon>
        <taxon>rosids</taxon>
        <taxon>fabids</taxon>
        <taxon>Malpighiales</taxon>
        <taxon>Salicaceae</taxon>
        <taxon>Saliceae</taxon>
        <taxon>Populus</taxon>
    </lineage>
</organism>
<evidence type="ECO:0000305" key="1"/>
<protein>
    <recommendedName>
        <fullName>ATP-dependent Clp protease ATP-binding subunit ClpA homolog</fullName>
    </recommendedName>
</protein>
<sequence length="72" mass="7888">GSGFVAVEIPFTPRVLELSLEEARVLENLGADPSNIRFQPVKVPEPSVDETIQILKFLPDKAIDLIDEAGSR</sequence>
<reference key="1">
    <citation type="journal article" date="2006" name="Ann. Bot.">
        <title>Proteome profiling of Populus euphratica Oliv. upon heat stress.</title>
        <authorList>
            <person name="Ferreira S."/>
            <person name="Hjernoe K."/>
            <person name="Larsen M."/>
            <person name="Wingsle G."/>
            <person name="Larsen P."/>
            <person name="Fey S."/>
            <person name="Roepstorff P."/>
            <person name="Pais M.S."/>
        </authorList>
    </citation>
    <scope>PROTEIN SEQUENCE</scope>
    <source>
        <tissue>Leaf</tissue>
    </source>
</reference>
<name>CLPA_POPEU</name>
<dbReference type="SMR" id="P84565"/>
<dbReference type="Proteomes" id="UP000694918">
    <property type="component" value="Unplaced"/>
</dbReference>
<dbReference type="GO" id="GO:0009507">
    <property type="term" value="C:chloroplast"/>
    <property type="evidence" value="ECO:0007669"/>
    <property type="project" value="UniProtKB-SubCell"/>
</dbReference>
<dbReference type="GO" id="GO:0005524">
    <property type="term" value="F:ATP binding"/>
    <property type="evidence" value="ECO:0007669"/>
    <property type="project" value="UniProtKB-KW"/>
</dbReference>
<dbReference type="Gene3D" id="1.10.8.60">
    <property type="match status" value="1"/>
</dbReference>
<dbReference type="InterPro" id="IPR041546">
    <property type="entry name" value="ClpA/ClpB_AAA_lid"/>
</dbReference>
<dbReference type="Pfam" id="PF17871">
    <property type="entry name" value="AAA_lid_9"/>
    <property type="match status" value="1"/>
</dbReference>
<feature type="chain" id="PRO_0000191215" description="ATP-dependent Clp protease ATP-binding subunit ClpA homolog">
    <location>
        <begin position="1" status="less than"/>
        <end position="72" status="greater than"/>
    </location>
</feature>
<feature type="non-consecutive residues" evidence="1">
    <location>
        <begin position="14"/>
        <end position="15"/>
    </location>
</feature>
<feature type="non-consecutive residues" evidence="1">
    <location>
        <begin position="24"/>
        <end position="25"/>
    </location>
</feature>
<feature type="non-consecutive residues" evidence="1">
    <location>
        <begin position="37"/>
        <end position="38"/>
    </location>
</feature>
<feature type="non-consecutive residues" evidence="1">
    <location>
        <begin position="56"/>
        <end position="57"/>
    </location>
</feature>
<feature type="non-terminal residue">
    <location>
        <position position="1"/>
    </location>
</feature>
<feature type="non-terminal residue">
    <location>
        <position position="72"/>
    </location>
</feature>
<proteinExistence type="evidence at protein level"/>
<accession>P84565</accession>
<comment type="function">
    <text evidence="1">May interact with a ClpP-like protease involved in degradation of denatured proteins in the chloroplast.</text>
</comment>
<comment type="subcellular location">
    <subcellularLocation>
        <location evidence="1">Plastid</location>
        <location evidence="1">Chloroplast</location>
    </subcellularLocation>
</comment>
<comment type="similarity">
    <text evidence="1">Belongs to the ClpA/ClpB family.</text>
</comment>